<gene>
    <name evidence="1" type="primary">cheB1</name>
    <name type="ordered locus">BMA2854</name>
</gene>
<organism>
    <name type="scientific">Burkholderia mallei (strain ATCC 23344)</name>
    <dbReference type="NCBI Taxonomy" id="243160"/>
    <lineage>
        <taxon>Bacteria</taxon>
        <taxon>Pseudomonadati</taxon>
        <taxon>Pseudomonadota</taxon>
        <taxon>Betaproteobacteria</taxon>
        <taxon>Burkholderiales</taxon>
        <taxon>Burkholderiaceae</taxon>
        <taxon>Burkholderia</taxon>
        <taxon>pseudomallei group</taxon>
    </lineage>
</organism>
<feature type="chain" id="PRO_0000225443" description="Protein-glutamate methylesterase/protein-glutamine glutaminase 1">
    <location>
        <begin position="1"/>
        <end position="364"/>
    </location>
</feature>
<feature type="domain" description="Response regulatory" evidence="1">
    <location>
        <begin position="6"/>
        <end position="123"/>
    </location>
</feature>
<feature type="domain" description="CheB-type methylesterase" evidence="1">
    <location>
        <begin position="165"/>
        <end position="357"/>
    </location>
</feature>
<feature type="active site" evidence="1">
    <location>
        <position position="177"/>
    </location>
</feature>
<feature type="active site" evidence="1">
    <location>
        <position position="203"/>
    </location>
</feature>
<feature type="active site" evidence="1">
    <location>
        <position position="299"/>
    </location>
</feature>
<feature type="modified residue" description="4-aspartylphosphate" evidence="1">
    <location>
        <position position="57"/>
    </location>
</feature>
<protein>
    <recommendedName>
        <fullName evidence="1">Protein-glutamate methylesterase/protein-glutamine glutaminase 1</fullName>
        <ecNumber evidence="1">3.1.1.61</ecNumber>
        <ecNumber evidence="1">3.5.1.44</ecNumber>
    </recommendedName>
</protein>
<name>CHEB1_BURMA</name>
<accession>Q62G12</accession>
<sequence length="364" mass="39068">MQKKIKVLCVDDSALIRSLMTEIINSQPDMEVCATAPDPLVARELIKQHNPDVLTLDVEMPRMDGLDFLEKLMRLRPMPVVMVSSLTERGSEITLRALELGAVDFVTKPRVGIRDGMLDYSEKLADKVRAASRARVRQNPQPHAAAAAAAHGHAGAAAPLINNPLVSTEKLIIVGASTGGTEAIREVLTPLPPDAPAVLIAQHMPPGFTRSFAQRLNGLCRISVKEAEHGERVLPGHAYIAPGHAHLLLARSGANYIAHLSDEPPVNRHRPSVDVLFRSAAQHAGKNALGVILTGMGRDGAAGLLEMKKAGAYTFAQDEASCVVFGMPREAIAMGGVDDVAPLSDMSRRIMARLASMGDRVQRV</sequence>
<proteinExistence type="inferred from homology"/>
<keyword id="KW-0145">Chemotaxis</keyword>
<keyword id="KW-0963">Cytoplasm</keyword>
<keyword id="KW-0378">Hydrolase</keyword>
<keyword id="KW-0597">Phosphoprotein</keyword>
<keyword id="KW-1185">Reference proteome</keyword>
<comment type="function">
    <text evidence="1">Involved in chemotaxis. Part of a chemotaxis signal transduction system that modulates chemotaxis in response to various stimuli. Catalyzes the demethylation of specific methylglutamate residues introduced into the chemoreceptors (methyl-accepting chemotaxis proteins or MCP) by CheR. Also mediates the irreversible deamidation of specific glutamine residues to glutamic acid.</text>
</comment>
<comment type="catalytic activity">
    <reaction evidence="1">
        <text>[protein]-L-glutamate 5-O-methyl ester + H2O = L-glutamyl-[protein] + methanol + H(+)</text>
        <dbReference type="Rhea" id="RHEA:23236"/>
        <dbReference type="Rhea" id="RHEA-COMP:10208"/>
        <dbReference type="Rhea" id="RHEA-COMP:10311"/>
        <dbReference type="ChEBI" id="CHEBI:15377"/>
        <dbReference type="ChEBI" id="CHEBI:15378"/>
        <dbReference type="ChEBI" id="CHEBI:17790"/>
        <dbReference type="ChEBI" id="CHEBI:29973"/>
        <dbReference type="ChEBI" id="CHEBI:82795"/>
        <dbReference type="EC" id="3.1.1.61"/>
    </reaction>
</comment>
<comment type="catalytic activity">
    <reaction evidence="1">
        <text>L-glutaminyl-[protein] + H2O = L-glutamyl-[protein] + NH4(+)</text>
        <dbReference type="Rhea" id="RHEA:16441"/>
        <dbReference type="Rhea" id="RHEA-COMP:10207"/>
        <dbReference type="Rhea" id="RHEA-COMP:10208"/>
        <dbReference type="ChEBI" id="CHEBI:15377"/>
        <dbReference type="ChEBI" id="CHEBI:28938"/>
        <dbReference type="ChEBI" id="CHEBI:29973"/>
        <dbReference type="ChEBI" id="CHEBI:30011"/>
        <dbReference type="EC" id="3.5.1.44"/>
    </reaction>
</comment>
<comment type="subcellular location">
    <subcellularLocation>
        <location evidence="1">Cytoplasm</location>
    </subcellularLocation>
</comment>
<comment type="domain">
    <text evidence="1">Contains a C-terminal catalytic domain, and an N-terminal region which modulates catalytic activity.</text>
</comment>
<comment type="PTM">
    <text evidence="1">Phosphorylated by CheA. Phosphorylation of the N-terminal regulatory domain activates the methylesterase activity.</text>
</comment>
<comment type="similarity">
    <text evidence="1">Belongs to the CheB family.</text>
</comment>
<evidence type="ECO:0000255" key="1">
    <source>
        <dbReference type="HAMAP-Rule" id="MF_00099"/>
    </source>
</evidence>
<reference key="1">
    <citation type="journal article" date="2004" name="Proc. Natl. Acad. Sci. U.S.A.">
        <title>Structural flexibility in the Burkholderia mallei genome.</title>
        <authorList>
            <person name="Nierman W.C."/>
            <person name="DeShazer D."/>
            <person name="Kim H.S."/>
            <person name="Tettelin H."/>
            <person name="Nelson K.E."/>
            <person name="Feldblyum T.V."/>
            <person name="Ulrich R.L."/>
            <person name="Ronning C.M."/>
            <person name="Brinkac L.M."/>
            <person name="Daugherty S.C."/>
            <person name="Davidsen T.D."/>
            <person name="DeBoy R.T."/>
            <person name="Dimitrov G."/>
            <person name="Dodson R.J."/>
            <person name="Durkin A.S."/>
            <person name="Gwinn M.L."/>
            <person name="Haft D.H."/>
            <person name="Khouri H.M."/>
            <person name="Kolonay J.F."/>
            <person name="Madupu R."/>
            <person name="Mohammoud Y."/>
            <person name="Nelson W.C."/>
            <person name="Radune D."/>
            <person name="Romero C.M."/>
            <person name="Sarria S."/>
            <person name="Selengut J."/>
            <person name="Shamblin C."/>
            <person name="Sullivan S.A."/>
            <person name="White O."/>
            <person name="Yu Y."/>
            <person name="Zafar N."/>
            <person name="Zhou L."/>
            <person name="Fraser C.M."/>
        </authorList>
    </citation>
    <scope>NUCLEOTIDE SEQUENCE [LARGE SCALE GENOMIC DNA]</scope>
    <source>
        <strain>ATCC 23344</strain>
    </source>
</reference>
<dbReference type="EC" id="3.1.1.61" evidence="1"/>
<dbReference type="EC" id="3.5.1.44" evidence="1"/>
<dbReference type="EMBL" id="CP000010">
    <property type="protein sequence ID" value="AAU48333.1"/>
    <property type="molecule type" value="Genomic_DNA"/>
</dbReference>
<dbReference type="RefSeq" id="WP_004198645.1">
    <property type="nucleotide sequence ID" value="NC_006348.1"/>
</dbReference>
<dbReference type="RefSeq" id="YP_104365.1">
    <property type="nucleotide sequence ID" value="NC_006348.1"/>
</dbReference>
<dbReference type="SMR" id="Q62G12"/>
<dbReference type="KEGG" id="bma:BMA2854"/>
<dbReference type="PATRIC" id="fig|243160.12.peg.2925"/>
<dbReference type="eggNOG" id="COG2201">
    <property type="taxonomic scope" value="Bacteria"/>
</dbReference>
<dbReference type="HOGENOM" id="CLU_000445_51_0_4"/>
<dbReference type="Proteomes" id="UP000006693">
    <property type="component" value="Chromosome 1"/>
</dbReference>
<dbReference type="GO" id="GO:0005737">
    <property type="term" value="C:cytoplasm"/>
    <property type="evidence" value="ECO:0007669"/>
    <property type="project" value="UniProtKB-SubCell"/>
</dbReference>
<dbReference type="GO" id="GO:0000156">
    <property type="term" value="F:phosphorelay response regulator activity"/>
    <property type="evidence" value="ECO:0007669"/>
    <property type="project" value="InterPro"/>
</dbReference>
<dbReference type="GO" id="GO:0008984">
    <property type="term" value="F:protein-glutamate methylesterase activity"/>
    <property type="evidence" value="ECO:0007669"/>
    <property type="project" value="UniProtKB-UniRule"/>
</dbReference>
<dbReference type="GO" id="GO:0050568">
    <property type="term" value="F:protein-glutamine glutaminase activity"/>
    <property type="evidence" value="ECO:0007669"/>
    <property type="project" value="UniProtKB-UniRule"/>
</dbReference>
<dbReference type="GO" id="GO:0006935">
    <property type="term" value="P:chemotaxis"/>
    <property type="evidence" value="ECO:0007669"/>
    <property type="project" value="UniProtKB-UniRule"/>
</dbReference>
<dbReference type="CDD" id="cd16432">
    <property type="entry name" value="CheB_Rec"/>
    <property type="match status" value="1"/>
</dbReference>
<dbReference type="CDD" id="cd17541">
    <property type="entry name" value="REC_CheB-like"/>
    <property type="match status" value="1"/>
</dbReference>
<dbReference type="FunFam" id="3.40.50.180:FF:000001">
    <property type="entry name" value="Protein-glutamate methylesterase/protein-glutamine glutaminase"/>
    <property type="match status" value="1"/>
</dbReference>
<dbReference type="FunFam" id="3.40.50.2300:FF:000060">
    <property type="entry name" value="Protein-glutamate methylesterase/protein-glutamine glutaminase"/>
    <property type="match status" value="1"/>
</dbReference>
<dbReference type="Gene3D" id="3.40.50.2300">
    <property type="match status" value="1"/>
</dbReference>
<dbReference type="Gene3D" id="3.40.50.180">
    <property type="entry name" value="Methylesterase CheB, C-terminal domain"/>
    <property type="match status" value="1"/>
</dbReference>
<dbReference type="HAMAP" id="MF_00099">
    <property type="entry name" value="CheB_chemtxs"/>
    <property type="match status" value="1"/>
</dbReference>
<dbReference type="InterPro" id="IPR008248">
    <property type="entry name" value="CheB-like"/>
</dbReference>
<dbReference type="InterPro" id="IPR035909">
    <property type="entry name" value="CheB_C"/>
</dbReference>
<dbReference type="InterPro" id="IPR011006">
    <property type="entry name" value="CheY-like_superfamily"/>
</dbReference>
<dbReference type="InterPro" id="IPR000673">
    <property type="entry name" value="Sig_transdc_resp-reg_Me-estase"/>
</dbReference>
<dbReference type="InterPro" id="IPR001789">
    <property type="entry name" value="Sig_transdc_resp-reg_receiver"/>
</dbReference>
<dbReference type="NCBIfam" id="NF001965">
    <property type="entry name" value="PRK00742.1"/>
    <property type="match status" value="1"/>
</dbReference>
<dbReference type="NCBIfam" id="NF009206">
    <property type="entry name" value="PRK12555.1"/>
    <property type="match status" value="1"/>
</dbReference>
<dbReference type="PANTHER" id="PTHR42872">
    <property type="entry name" value="PROTEIN-GLUTAMATE METHYLESTERASE/PROTEIN-GLUTAMINE GLUTAMINASE"/>
    <property type="match status" value="1"/>
</dbReference>
<dbReference type="PANTHER" id="PTHR42872:SF6">
    <property type="entry name" value="PROTEIN-GLUTAMATE METHYLESTERASE_PROTEIN-GLUTAMINE GLUTAMINASE"/>
    <property type="match status" value="1"/>
</dbReference>
<dbReference type="Pfam" id="PF01339">
    <property type="entry name" value="CheB_methylest"/>
    <property type="match status" value="1"/>
</dbReference>
<dbReference type="Pfam" id="PF00072">
    <property type="entry name" value="Response_reg"/>
    <property type="match status" value="1"/>
</dbReference>
<dbReference type="PIRSF" id="PIRSF000876">
    <property type="entry name" value="RR_chemtxs_CheB"/>
    <property type="match status" value="1"/>
</dbReference>
<dbReference type="SMART" id="SM00448">
    <property type="entry name" value="REC"/>
    <property type="match status" value="1"/>
</dbReference>
<dbReference type="SUPFAM" id="SSF52172">
    <property type="entry name" value="CheY-like"/>
    <property type="match status" value="1"/>
</dbReference>
<dbReference type="SUPFAM" id="SSF52738">
    <property type="entry name" value="Methylesterase CheB, C-terminal domain"/>
    <property type="match status" value="1"/>
</dbReference>
<dbReference type="PROSITE" id="PS50122">
    <property type="entry name" value="CHEB"/>
    <property type="match status" value="1"/>
</dbReference>
<dbReference type="PROSITE" id="PS50110">
    <property type="entry name" value="RESPONSE_REGULATORY"/>
    <property type="match status" value="1"/>
</dbReference>